<proteinExistence type="evidence at protein level"/>
<feature type="chain" id="PRO_0000057954" description="Nuclear receptor-interacting protein 3">
    <location>
        <begin position="1"/>
        <end position="240"/>
    </location>
</feature>
<feature type="sequence conflict" description="In Ref. 2; BAC38775." evidence="1" ref="2">
    <original>L</original>
    <variation>F</variation>
    <location>
        <position position="68"/>
    </location>
</feature>
<organism>
    <name type="scientific">Mus musculus</name>
    <name type="common">Mouse</name>
    <dbReference type="NCBI Taxonomy" id="10090"/>
    <lineage>
        <taxon>Eukaryota</taxon>
        <taxon>Metazoa</taxon>
        <taxon>Chordata</taxon>
        <taxon>Craniata</taxon>
        <taxon>Vertebrata</taxon>
        <taxon>Euteleostomi</taxon>
        <taxon>Mammalia</taxon>
        <taxon>Eutheria</taxon>
        <taxon>Euarchontoglires</taxon>
        <taxon>Glires</taxon>
        <taxon>Rodentia</taxon>
        <taxon>Myomorpha</taxon>
        <taxon>Muroidea</taxon>
        <taxon>Muridae</taxon>
        <taxon>Murinae</taxon>
        <taxon>Mus</taxon>
        <taxon>Mus</taxon>
    </lineage>
</organism>
<protein>
    <recommendedName>
        <fullName>Nuclear receptor-interacting protein 3</fullName>
    </recommendedName>
</protein>
<accession>Q9JJR9</accession>
<accession>Q8BUN8</accession>
<gene>
    <name type="primary">Nrip3</name>
    <name type="synonym">D7H11orf14</name>
</gene>
<sequence>MFYSGLLTEGGRKETDMREAASLRQQRRMKQAVQFIHKDSADLLPLDGLKKLGSSKDTQPHNILQRRLMETNLSKLRSTRVPWASKTNKFNQAKSEGLKKCEDEDMILVSCQCAGKDVKALVDTGCQYNLISSACVDRLGLKDHVKSHKHEGEKLSLPRHLKVVGQIEHLMITVGSLRLDCQAAVVDDNEKSLSLGLQTLRSLKCIINLDKHRLIVGKTDKEEIPFVETVSVNDDNTSEA</sequence>
<dbReference type="EMBL" id="AJ400878">
    <property type="protein sequence ID" value="CAB92294.1"/>
    <property type="molecule type" value="Genomic_DNA"/>
</dbReference>
<dbReference type="EMBL" id="AK083130">
    <property type="protein sequence ID" value="BAC38775.1"/>
    <property type="molecule type" value="mRNA"/>
</dbReference>
<dbReference type="CCDS" id="CCDS21739.1"/>
<dbReference type="RefSeq" id="NP_065635.1">
    <property type="nucleotide sequence ID" value="NM_020610.1"/>
</dbReference>
<dbReference type="SMR" id="Q9JJR9"/>
<dbReference type="BioGRID" id="219504">
    <property type="interactions" value="27"/>
</dbReference>
<dbReference type="FunCoup" id="Q9JJR9">
    <property type="interactions" value="46"/>
</dbReference>
<dbReference type="IntAct" id="Q9JJR9">
    <property type="interactions" value="27"/>
</dbReference>
<dbReference type="STRING" id="10090.ENSMUSP00000033331"/>
<dbReference type="MEROPS" id="A28.002"/>
<dbReference type="iPTMnet" id="Q9JJR9"/>
<dbReference type="PhosphoSitePlus" id="Q9JJR9"/>
<dbReference type="PaxDb" id="10090-ENSMUSP00000033331"/>
<dbReference type="ProteomicsDB" id="293971"/>
<dbReference type="Antibodypedia" id="24183">
    <property type="antibodies" value="215 antibodies from 26 providers"/>
</dbReference>
<dbReference type="DNASU" id="78593"/>
<dbReference type="Ensembl" id="ENSMUST00000033331.7">
    <property type="protein sequence ID" value="ENSMUSP00000033331.7"/>
    <property type="gene ID" value="ENSMUSG00000034825.15"/>
</dbReference>
<dbReference type="GeneID" id="78593"/>
<dbReference type="KEGG" id="mmu:78593"/>
<dbReference type="UCSC" id="uc009jef.1">
    <property type="organism name" value="mouse"/>
</dbReference>
<dbReference type="AGR" id="MGI:1925843"/>
<dbReference type="CTD" id="56675"/>
<dbReference type="MGI" id="MGI:1925843">
    <property type="gene designation" value="Nrip3"/>
</dbReference>
<dbReference type="VEuPathDB" id="HostDB:ENSMUSG00000034825"/>
<dbReference type="eggNOG" id="KOG0012">
    <property type="taxonomic scope" value="Eukaryota"/>
</dbReference>
<dbReference type="GeneTree" id="ENSGT00950000182999"/>
<dbReference type="HOGENOM" id="CLU_087166_1_0_1"/>
<dbReference type="InParanoid" id="Q9JJR9"/>
<dbReference type="OrthoDB" id="50585at9989"/>
<dbReference type="PhylomeDB" id="Q9JJR9"/>
<dbReference type="TreeFam" id="TF333421"/>
<dbReference type="BioGRID-ORCS" id="78593">
    <property type="hits" value="0 hits in 80 CRISPR screens"/>
</dbReference>
<dbReference type="ChiTaRS" id="Nrip3">
    <property type="organism name" value="mouse"/>
</dbReference>
<dbReference type="PRO" id="PR:Q9JJR9"/>
<dbReference type="Proteomes" id="UP000000589">
    <property type="component" value="Chromosome 7"/>
</dbReference>
<dbReference type="RNAct" id="Q9JJR9">
    <property type="molecule type" value="protein"/>
</dbReference>
<dbReference type="Bgee" id="ENSMUSG00000034825">
    <property type="expression patterns" value="Expressed in medial dorsal nucleus of thalamus and 145 other cell types or tissues"/>
</dbReference>
<dbReference type="ExpressionAtlas" id="Q9JJR9">
    <property type="expression patterns" value="baseline and differential"/>
</dbReference>
<dbReference type="GO" id="GO:0004190">
    <property type="term" value="F:aspartic-type endopeptidase activity"/>
    <property type="evidence" value="ECO:0007669"/>
    <property type="project" value="InterPro"/>
</dbReference>
<dbReference type="GO" id="GO:0006508">
    <property type="term" value="P:proteolysis"/>
    <property type="evidence" value="ECO:0007669"/>
    <property type="project" value="InterPro"/>
</dbReference>
<dbReference type="CDD" id="cd05480">
    <property type="entry name" value="NRIP_C"/>
    <property type="match status" value="1"/>
</dbReference>
<dbReference type="Gene3D" id="2.40.70.10">
    <property type="entry name" value="Acid Proteases"/>
    <property type="match status" value="1"/>
</dbReference>
<dbReference type="InterPro" id="IPR033821">
    <property type="entry name" value="NRIP_C"/>
</dbReference>
<dbReference type="InterPro" id="IPR019103">
    <property type="entry name" value="Peptidase_aspartic_DDI1-type"/>
</dbReference>
<dbReference type="InterPro" id="IPR021109">
    <property type="entry name" value="Peptidase_aspartic_dom_sf"/>
</dbReference>
<dbReference type="PANTHER" id="PTHR12917">
    <property type="entry name" value="ASPARTYL PROTEASE DDI-RELATED"/>
    <property type="match status" value="1"/>
</dbReference>
<dbReference type="PANTHER" id="PTHR12917:SF16">
    <property type="entry name" value="NUCLEAR RECEPTOR-INTERACTING PROTEIN 3"/>
    <property type="match status" value="1"/>
</dbReference>
<dbReference type="Pfam" id="PF09668">
    <property type="entry name" value="Asp_protease"/>
    <property type="match status" value="1"/>
</dbReference>
<dbReference type="SUPFAM" id="SSF50630">
    <property type="entry name" value="Acid proteases"/>
    <property type="match status" value="1"/>
</dbReference>
<keyword id="KW-1185">Reference proteome</keyword>
<reference key="1">
    <citation type="journal article" date="2001" name="Cytogenet. Cell Genet.">
        <title>Comparative genomic sequencing reveals a strikingly similar architecture of a conserved syntenic region on human chromosome 11p15.3 (including gene ST5) and mouse chromosome 7.</title>
        <authorList>
            <person name="Amid C."/>
            <person name="Bahr A."/>
            <person name="Mujica A."/>
            <person name="Sampson N."/>
            <person name="Bikar S.E."/>
            <person name="Winterpacht A."/>
            <person name="Zabel B."/>
            <person name="Hankeln T."/>
            <person name="Schmidt E.R."/>
        </authorList>
    </citation>
    <scope>NUCLEOTIDE SEQUENCE</scope>
</reference>
<reference key="2">
    <citation type="journal article" date="2005" name="Science">
        <title>The transcriptional landscape of the mammalian genome.</title>
        <authorList>
            <person name="Carninci P."/>
            <person name="Kasukawa T."/>
            <person name="Katayama S."/>
            <person name="Gough J."/>
            <person name="Frith M.C."/>
            <person name="Maeda N."/>
            <person name="Oyama R."/>
            <person name="Ravasi T."/>
            <person name="Lenhard B."/>
            <person name="Wells C."/>
            <person name="Kodzius R."/>
            <person name="Shimokawa K."/>
            <person name="Bajic V.B."/>
            <person name="Brenner S.E."/>
            <person name="Batalov S."/>
            <person name="Forrest A.R."/>
            <person name="Zavolan M."/>
            <person name="Davis M.J."/>
            <person name="Wilming L.G."/>
            <person name="Aidinis V."/>
            <person name="Allen J.E."/>
            <person name="Ambesi-Impiombato A."/>
            <person name="Apweiler R."/>
            <person name="Aturaliya R.N."/>
            <person name="Bailey T.L."/>
            <person name="Bansal M."/>
            <person name="Baxter L."/>
            <person name="Beisel K.W."/>
            <person name="Bersano T."/>
            <person name="Bono H."/>
            <person name="Chalk A.M."/>
            <person name="Chiu K.P."/>
            <person name="Choudhary V."/>
            <person name="Christoffels A."/>
            <person name="Clutterbuck D.R."/>
            <person name="Crowe M.L."/>
            <person name="Dalla E."/>
            <person name="Dalrymple B.P."/>
            <person name="de Bono B."/>
            <person name="Della Gatta G."/>
            <person name="di Bernardo D."/>
            <person name="Down T."/>
            <person name="Engstrom P."/>
            <person name="Fagiolini M."/>
            <person name="Faulkner G."/>
            <person name="Fletcher C.F."/>
            <person name="Fukushima T."/>
            <person name="Furuno M."/>
            <person name="Futaki S."/>
            <person name="Gariboldi M."/>
            <person name="Georgii-Hemming P."/>
            <person name="Gingeras T.R."/>
            <person name="Gojobori T."/>
            <person name="Green R.E."/>
            <person name="Gustincich S."/>
            <person name="Harbers M."/>
            <person name="Hayashi Y."/>
            <person name="Hensch T.K."/>
            <person name="Hirokawa N."/>
            <person name="Hill D."/>
            <person name="Huminiecki L."/>
            <person name="Iacono M."/>
            <person name="Ikeo K."/>
            <person name="Iwama A."/>
            <person name="Ishikawa T."/>
            <person name="Jakt M."/>
            <person name="Kanapin A."/>
            <person name="Katoh M."/>
            <person name="Kawasawa Y."/>
            <person name="Kelso J."/>
            <person name="Kitamura H."/>
            <person name="Kitano H."/>
            <person name="Kollias G."/>
            <person name="Krishnan S.P."/>
            <person name="Kruger A."/>
            <person name="Kummerfeld S.K."/>
            <person name="Kurochkin I.V."/>
            <person name="Lareau L.F."/>
            <person name="Lazarevic D."/>
            <person name="Lipovich L."/>
            <person name="Liu J."/>
            <person name="Liuni S."/>
            <person name="McWilliam S."/>
            <person name="Madan Babu M."/>
            <person name="Madera M."/>
            <person name="Marchionni L."/>
            <person name="Matsuda H."/>
            <person name="Matsuzawa S."/>
            <person name="Miki H."/>
            <person name="Mignone F."/>
            <person name="Miyake S."/>
            <person name="Morris K."/>
            <person name="Mottagui-Tabar S."/>
            <person name="Mulder N."/>
            <person name="Nakano N."/>
            <person name="Nakauchi H."/>
            <person name="Ng P."/>
            <person name="Nilsson R."/>
            <person name="Nishiguchi S."/>
            <person name="Nishikawa S."/>
            <person name="Nori F."/>
            <person name="Ohara O."/>
            <person name="Okazaki Y."/>
            <person name="Orlando V."/>
            <person name="Pang K.C."/>
            <person name="Pavan W.J."/>
            <person name="Pavesi G."/>
            <person name="Pesole G."/>
            <person name="Petrovsky N."/>
            <person name="Piazza S."/>
            <person name="Reed J."/>
            <person name="Reid J.F."/>
            <person name="Ring B.Z."/>
            <person name="Ringwald M."/>
            <person name="Rost B."/>
            <person name="Ruan Y."/>
            <person name="Salzberg S.L."/>
            <person name="Sandelin A."/>
            <person name="Schneider C."/>
            <person name="Schoenbach C."/>
            <person name="Sekiguchi K."/>
            <person name="Semple C.A."/>
            <person name="Seno S."/>
            <person name="Sessa L."/>
            <person name="Sheng Y."/>
            <person name="Shibata Y."/>
            <person name="Shimada H."/>
            <person name="Shimada K."/>
            <person name="Silva D."/>
            <person name="Sinclair B."/>
            <person name="Sperling S."/>
            <person name="Stupka E."/>
            <person name="Sugiura K."/>
            <person name="Sultana R."/>
            <person name="Takenaka Y."/>
            <person name="Taki K."/>
            <person name="Tammoja K."/>
            <person name="Tan S.L."/>
            <person name="Tang S."/>
            <person name="Taylor M.S."/>
            <person name="Tegner J."/>
            <person name="Teichmann S.A."/>
            <person name="Ueda H.R."/>
            <person name="van Nimwegen E."/>
            <person name="Verardo R."/>
            <person name="Wei C.L."/>
            <person name="Yagi K."/>
            <person name="Yamanishi H."/>
            <person name="Zabarovsky E."/>
            <person name="Zhu S."/>
            <person name="Zimmer A."/>
            <person name="Hide W."/>
            <person name="Bult C."/>
            <person name="Grimmond S.M."/>
            <person name="Teasdale R.D."/>
            <person name="Liu E.T."/>
            <person name="Brusic V."/>
            <person name="Quackenbush J."/>
            <person name="Wahlestedt C."/>
            <person name="Mattick J.S."/>
            <person name="Hume D.A."/>
            <person name="Kai C."/>
            <person name="Sasaki D."/>
            <person name="Tomaru Y."/>
            <person name="Fukuda S."/>
            <person name="Kanamori-Katayama M."/>
            <person name="Suzuki M."/>
            <person name="Aoki J."/>
            <person name="Arakawa T."/>
            <person name="Iida J."/>
            <person name="Imamura K."/>
            <person name="Itoh M."/>
            <person name="Kato T."/>
            <person name="Kawaji H."/>
            <person name="Kawagashira N."/>
            <person name="Kawashima T."/>
            <person name="Kojima M."/>
            <person name="Kondo S."/>
            <person name="Konno H."/>
            <person name="Nakano K."/>
            <person name="Ninomiya N."/>
            <person name="Nishio T."/>
            <person name="Okada M."/>
            <person name="Plessy C."/>
            <person name="Shibata K."/>
            <person name="Shiraki T."/>
            <person name="Suzuki S."/>
            <person name="Tagami M."/>
            <person name="Waki K."/>
            <person name="Watahiki A."/>
            <person name="Okamura-Oho Y."/>
            <person name="Suzuki H."/>
            <person name="Kawai J."/>
            <person name="Hayashizaki Y."/>
        </authorList>
    </citation>
    <scope>NUCLEOTIDE SEQUENCE [LARGE SCALE MRNA]</scope>
    <source>
        <strain>C57BL/6J</strain>
        <tissue>Hippocampus</tissue>
    </source>
</reference>
<reference key="3">
    <citation type="journal article" date="2010" name="Cell">
        <title>A tissue-specific atlas of mouse protein phosphorylation and expression.</title>
        <authorList>
            <person name="Huttlin E.L."/>
            <person name="Jedrychowski M.P."/>
            <person name="Elias J.E."/>
            <person name="Goswami T."/>
            <person name="Rad R."/>
            <person name="Beausoleil S.A."/>
            <person name="Villen J."/>
            <person name="Haas W."/>
            <person name="Sowa M.E."/>
            <person name="Gygi S.P."/>
        </authorList>
    </citation>
    <scope>IDENTIFICATION BY MASS SPECTROMETRY [LARGE SCALE ANALYSIS]</scope>
    <source>
        <tissue>Brain</tissue>
    </source>
</reference>
<evidence type="ECO:0000305" key="1"/>
<name>NRIP3_MOUSE</name>